<comment type="function">
    <text>Casein kinases are operationally defined by their preferential utilization of acidic proteins such as caseins as substrates. The alpha chain contains the catalytic site. May participate in Wnt signaling.</text>
</comment>
<comment type="catalytic activity">
    <reaction>
        <text>L-seryl-[protein] + ATP = O-phospho-L-seryl-[protein] + ADP + H(+)</text>
        <dbReference type="Rhea" id="RHEA:17989"/>
        <dbReference type="Rhea" id="RHEA-COMP:9863"/>
        <dbReference type="Rhea" id="RHEA-COMP:11604"/>
        <dbReference type="ChEBI" id="CHEBI:15378"/>
        <dbReference type="ChEBI" id="CHEBI:29999"/>
        <dbReference type="ChEBI" id="CHEBI:30616"/>
        <dbReference type="ChEBI" id="CHEBI:83421"/>
        <dbReference type="ChEBI" id="CHEBI:456216"/>
        <dbReference type="EC" id="2.7.11.1"/>
    </reaction>
</comment>
<comment type="catalytic activity">
    <reaction>
        <text>L-threonyl-[protein] + ATP = O-phospho-L-threonyl-[protein] + ADP + H(+)</text>
        <dbReference type="Rhea" id="RHEA:46608"/>
        <dbReference type="Rhea" id="RHEA-COMP:11060"/>
        <dbReference type="Rhea" id="RHEA-COMP:11605"/>
        <dbReference type="ChEBI" id="CHEBI:15378"/>
        <dbReference type="ChEBI" id="CHEBI:30013"/>
        <dbReference type="ChEBI" id="CHEBI:30616"/>
        <dbReference type="ChEBI" id="CHEBI:61977"/>
        <dbReference type="ChEBI" id="CHEBI:456216"/>
        <dbReference type="EC" id="2.7.11.1"/>
    </reaction>
</comment>
<comment type="subunit">
    <text>Tetramer of two alpha and two beta chains.</text>
</comment>
<comment type="similarity">
    <text evidence="1">Belongs to the protein kinase superfamily. Ser/Thr protein kinase family. CK2 subfamily.</text>
</comment>
<keyword id="KW-0067">ATP-binding</keyword>
<keyword id="KW-0418">Kinase</keyword>
<keyword id="KW-0547">Nucleotide-binding</keyword>
<keyword id="KW-0723">Serine/threonine-protein kinase</keyword>
<keyword id="KW-0808">Transferase</keyword>
<keyword id="KW-0879">Wnt signaling pathway</keyword>
<organism>
    <name type="scientific">Spodoptera frugiperda</name>
    <name type="common">Fall armyworm</name>
    <dbReference type="NCBI Taxonomy" id="7108"/>
    <lineage>
        <taxon>Eukaryota</taxon>
        <taxon>Metazoa</taxon>
        <taxon>Ecdysozoa</taxon>
        <taxon>Arthropoda</taxon>
        <taxon>Hexapoda</taxon>
        <taxon>Insecta</taxon>
        <taxon>Pterygota</taxon>
        <taxon>Neoptera</taxon>
        <taxon>Endopterygota</taxon>
        <taxon>Lepidoptera</taxon>
        <taxon>Glossata</taxon>
        <taxon>Ditrysia</taxon>
        <taxon>Noctuoidea</taxon>
        <taxon>Noctuidae</taxon>
        <taxon>Amphipyrinae</taxon>
        <taxon>Spodoptera</taxon>
    </lineage>
</organism>
<name>CSK2A_SPOFR</name>
<evidence type="ECO:0000255" key="1">
    <source>
        <dbReference type="PROSITE-ProRule" id="PRU00159"/>
    </source>
</evidence>
<evidence type="ECO:0000255" key="2">
    <source>
        <dbReference type="PROSITE-ProRule" id="PRU10027"/>
    </source>
</evidence>
<evidence type="ECO:0000256" key="3">
    <source>
        <dbReference type="SAM" id="MobiDB-lite"/>
    </source>
</evidence>
<accession>O76484</accession>
<protein>
    <recommendedName>
        <fullName>Casein kinase II subunit alpha</fullName>
        <shortName>CK II subunit alpha</shortName>
        <ecNumber>2.7.11.1</ecNumber>
    </recommendedName>
</protein>
<sequence>MTMAVPSRARVYADVNSQRPREYWDYESYVVDWGNQEDYQLVRKLGRGKYSEVFEAINITNNEKCVVKILKPVKKKKIKREIKILENLRGGTNIITLQAVVKDPVSRTPALIFEHVNNTDFKQLYQTLSDYDIRYYLYELLKALDYCHSMGIMHRDVKPHNVMIDHDHRKLRLIDWGLAEFYHPGQDYNVRVASRYFKGPELLVDYQMYDYSLDMWSLGCMLASMIFRKEPFFHGHDNYDQLVRIAKVLGTEELFEYLDKYHIELDPRFNDILGRHSRKRWERFVHSENQHLVSPEALDFLDRLLRYDHYERYTAREAMDHPYFYPIVKEQGRMVSSNSPTPNALQGPISTTE</sequence>
<reference key="1">
    <citation type="submission" date="1998-06" db="EMBL/GenBank/DDBJ databases">
        <title>Identification, cloning and expression of Spodoptera frugiperda casein kinase II.</title>
        <authorList>
            <person name="Ebel W."/>
            <person name="Steplewski A."/>
            <person name="Robertson N.M."/>
            <person name="Alnemri E.S."/>
            <person name="Litwack G."/>
        </authorList>
    </citation>
    <scope>NUCLEOTIDE SEQUENCE [MRNA]</scope>
</reference>
<proteinExistence type="evidence at transcript level"/>
<feature type="chain" id="PRO_0000085904" description="Casein kinase II subunit alpha">
    <location>
        <begin position="1"/>
        <end position="353"/>
    </location>
</feature>
<feature type="domain" description="Protein kinase" evidence="1">
    <location>
        <begin position="39"/>
        <end position="324"/>
    </location>
</feature>
<feature type="region of interest" description="Disordered" evidence="3">
    <location>
        <begin position="334"/>
        <end position="353"/>
    </location>
</feature>
<feature type="active site" description="Proton acceptor" evidence="1 2">
    <location>
        <position position="156"/>
    </location>
</feature>
<feature type="binding site" evidence="1">
    <location>
        <begin position="45"/>
        <end position="53"/>
    </location>
    <ligand>
        <name>ATP</name>
        <dbReference type="ChEBI" id="CHEBI:30616"/>
    </ligand>
</feature>
<feature type="binding site" evidence="1">
    <location>
        <position position="68"/>
    </location>
    <ligand>
        <name>ATP</name>
        <dbReference type="ChEBI" id="CHEBI:30616"/>
    </ligand>
</feature>
<dbReference type="EC" id="2.7.11.1"/>
<dbReference type="EMBL" id="AF071210">
    <property type="protein sequence ID" value="AAC24041.1"/>
    <property type="molecule type" value="mRNA"/>
</dbReference>
<dbReference type="RefSeq" id="XP_050555045.1">
    <property type="nucleotide sequence ID" value="XM_050699088.1"/>
</dbReference>
<dbReference type="SMR" id="O76484"/>
<dbReference type="EnsemblMetazoa" id="XM_050699088.1">
    <property type="protein sequence ID" value="XP_050555045.1"/>
    <property type="gene ID" value="LOC118279526"/>
</dbReference>
<dbReference type="GeneID" id="118279526"/>
<dbReference type="OrthoDB" id="10254671at2759"/>
<dbReference type="Proteomes" id="UP000829999">
    <property type="component" value="Chromosome 15"/>
</dbReference>
<dbReference type="GO" id="GO:0005829">
    <property type="term" value="C:cytosol"/>
    <property type="evidence" value="ECO:0007669"/>
    <property type="project" value="TreeGrafter"/>
</dbReference>
<dbReference type="GO" id="GO:0005634">
    <property type="term" value="C:nucleus"/>
    <property type="evidence" value="ECO:0007669"/>
    <property type="project" value="TreeGrafter"/>
</dbReference>
<dbReference type="GO" id="GO:0005956">
    <property type="term" value="C:protein kinase CK2 complex"/>
    <property type="evidence" value="ECO:0007669"/>
    <property type="project" value="TreeGrafter"/>
</dbReference>
<dbReference type="GO" id="GO:0005524">
    <property type="term" value="F:ATP binding"/>
    <property type="evidence" value="ECO:0007669"/>
    <property type="project" value="UniProtKB-KW"/>
</dbReference>
<dbReference type="GO" id="GO:0106310">
    <property type="term" value="F:protein serine kinase activity"/>
    <property type="evidence" value="ECO:0007669"/>
    <property type="project" value="RHEA"/>
</dbReference>
<dbReference type="GO" id="GO:0004674">
    <property type="term" value="F:protein serine/threonine kinase activity"/>
    <property type="evidence" value="ECO:0007669"/>
    <property type="project" value="UniProtKB-KW"/>
</dbReference>
<dbReference type="GO" id="GO:0051726">
    <property type="term" value="P:regulation of cell cycle"/>
    <property type="evidence" value="ECO:0007669"/>
    <property type="project" value="TreeGrafter"/>
</dbReference>
<dbReference type="GO" id="GO:0016055">
    <property type="term" value="P:Wnt signaling pathway"/>
    <property type="evidence" value="ECO:0007669"/>
    <property type="project" value="UniProtKB-KW"/>
</dbReference>
<dbReference type="CDD" id="cd14132">
    <property type="entry name" value="STKc_CK2_alpha"/>
    <property type="match status" value="1"/>
</dbReference>
<dbReference type="FunFam" id="1.10.510.10:FF:000059">
    <property type="entry name" value="Casein kinase II subunit alpha"/>
    <property type="match status" value="1"/>
</dbReference>
<dbReference type="FunFam" id="3.30.200.20:FF:000088">
    <property type="entry name" value="Casein kinase II subunit alpha"/>
    <property type="match status" value="1"/>
</dbReference>
<dbReference type="Gene3D" id="3.30.200.20">
    <property type="entry name" value="Phosphorylase Kinase, domain 1"/>
    <property type="match status" value="1"/>
</dbReference>
<dbReference type="Gene3D" id="1.10.510.10">
    <property type="entry name" value="Transferase(Phosphotransferase) domain 1"/>
    <property type="match status" value="1"/>
</dbReference>
<dbReference type="InterPro" id="IPR045216">
    <property type="entry name" value="CK2_alpha"/>
</dbReference>
<dbReference type="InterPro" id="IPR011009">
    <property type="entry name" value="Kinase-like_dom_sf"/>
</dbReference>
<dbReference type="InterPro" id="IPR000719">
    <property type="entry name" value="Prot_kinase_dom"/>
</dbReference>
<dbReference type="InterPro" id="IPR017441">
    <property type="entry name" value="Protein_kinase_ATP_BS"/>
</dbReference>
<dbReference type="InterPro" id="IPR008271">
    <property type="entry name" value="Ser/Thr_kinase_AS"/>
</dbReference>
<dbReference type="PANTHER" id="PTHR24054">
    <property type="entry name" value="CASEIN KINASE II SUBUNIT ALPHA"/>
    <property type="match status" value="1"/>
</dbReference>
<dbReference type="PANTHER" id="PTHR24054:SF0">
    <property type="entry name" value="CASEIN KINASE II SUBUNIT ALPHA"/>
    <property type="match status" value="1"/>
</dbReference>
<dbReference type="Pfam" id="PF00069">
    <property type="entry name" value="Pkinase"/>
    <property type="match status" value="1"/>
</dbReference>
<dbReference type="SMART" id="SM00220">
    <property type="entry name" value="S_TKc"/>
    <property type="match status" value="1"/>
</dbReference>
<dbReference type="SUPFAM" id="SSF56112">
    <property type="entry name" value="Protein kinase-like (PK-like)"/>
    <property type="match status" value="1"/>
</dbReference>
<dbReference type="PROSITE" id="PS00107">
    <property type="entry name" value="PROTEIN_KINASE_ATP"/>
    <property type="match status" value="1"/>
</dbReference>
<dbReference type="PROSITE" id="PS50011">
    <property type="entry name" value="PROTEIN_KINASE_DOM"/>
    <property type="match status" value="1"/>
</dbReference>
<dbReference type="PROSITE" id="PS00108">
    <property type="entry name" value="PROTEIN_KINASE_ST"/>
    <property type="match status" value="1"/>
</dbReference>